<accession>Q5X1B7</accession>
<reference key="1">
    <citation type="journal article" date="2004" name="Nat. Genet.">
        <title>Evidence in the Legionella pneumophila genome for exploitation of host cell functions and high genome plasticity.</title>
        <authorList>
            <person name="Cazalet C."/>
            <person name="Rusniok C."/>
            <person name="Brueggemann H."/>
            <person name="Zidane N."/>
            <person name="Magnier A."/>
            <person name="Ma L."/>
            <person name="Tichit M."/>
            <person name="Jarraud S."/>
            <person name="Bouchier C."/>
            <person name="Vandenesch F."/>
            <person name="Kunst F."/>
            <person name="Etienne J."/>
            <person name="Glaser P."/>
            <person name="Buchrieser C."/>
        </authorList>
    </citation>
    <scope>NUCLEOTIDE SEQUENCE [LARGE SCALE GENOMIC DNA]</scope>
    <source>
        <strain>Paris</strain>
    </source>
</reference>
<dbReference type="EC" id="7.1.1.-" evidence="1"/>
<dbReference type="EMBL" id="CR628336">
    <property type="protein sequence ID" value="CAH13979.1"/>
    <property type="molecule type" value="Genomic_DNA"/>
</dbReference>
<dbReference type="RefSeq" id="WP_010948468.1">
    <property type="nucleotide sequence ID" value="NC_006368.1"/>
</dbReference>
<dbReference type="SMR" id="Q5X1B7"/>
<dbReference type="GeneID" id="57036777"/>
<dbReference type="KEGG" id="lpp:lpp2826"/>
<dbReference type="LegioList" id="lpp2826"/>
<dbReference type="HOGENOM" id="CLU_144724_2_0_6"/>
<dbReference type="GO" id="GO:0030964">
    <property type="term" value="C:NADH dehydrogenase complex"/>
    <property type="evidence" value="ECO:0007669"/>
    <property type="project" value="TreeGrafter"/>
</dbReference>
<dbReference type="GO" id="GO:0005886">
    <property type="term" value="C:plasma membrane"/>
    <property type="evidence" value="ECO:0007669"/>
    <property type="project" value="UniProtKB-SubCell"/>
</dbReference>
<dbReference type="GO" id="GO:0050136">
    <property type="term" value="F:NADH:ubiquinone reductase (non-electrogenic) activity"/>
    <property type="evidence" value="ECO:0007669"/>
    <property type="project" value="UniProtKB-UniRule"/>
</dbReference>
<dbReference type="GO" id="GO:0048038">
    <property type="term" value="F:quinone binding"/>
    <property type="evidence" value="ECO:0007669"/>
    <property type="project" value="UniProtKB-KW"/>
</dbReference>
<dbReference type="GO" id="GO:0042773">
    <property type="term" value="P:ATP synthesis coupled electron transport"/>
    <property type="evidence" value="ECO:0007669"/>
    <property type="project" value="InterPro"/>
</dbReference>
<dbReference type="FunFam" id="1.10.287.3510:FF:000001">
    <property type="entry name" value="NADH-quinone oxidoreductase subunit K"/>
    <property type="match status" value="1"/>
</dbReference>
<dbReference type="Gene3D" id="1.10.287.3510">
    <property type="match status" value="1"/>
</dbReference>
<dbReference type="HAMAP" id="MF_01456">
    <property type="entry name" value="NDH1_NuoK"/>
    <property type="match status" value="1"/>
</dbReference>
<dbReference type="InterPro" id="IPR001133">
    <property type="entry name" value="NADH_UbQ_OxRdtase_chain4L/K"/>
</dbReference>
<dbReference type="InterPro" id="IPR039428">
    <property type="entry name" value="NUOK/Mnh_C1-like"/>
</dbReference>
<dbReference type="NCBIfam" id="NF004320">
    <property type="entry name" value="PRK05715.1-2"/>
    <property type="match status" value="1"/>
</dbReference>
<dbReference type="NCBIfam" id="NF004321">
    <property type="entry name" value="PRK05715.1-3"/>
    <property type="match status" value="1"/>
</dbReference>
<dbReference type="NCBIfam" id="NF004323">
    <property type="entry name" value="PRK05715.1-5"/>
    <property type="match status" value="1"/>
</dbReference>
<dbReference type="PANTHER" id="PTHR11434:SF21">
    <property type="entry name" value="NADH DEHYDROGENASE SUBUNIT 4L-RELATED"/>
    <property type="match status" value="1"/>
</dbReference>
<dbReference type="PANTHER" id="PTHR11434">
    <property type="entry name" value="NADH-UBIQUINONE OXIDOREDUCTASE SUBUNIT ND4L"/>
    <property type="match status" value="1"/>
</dbReference>
<dbReference type="Pfam" id="PF00420">
    <property type="entry name" value="Oxidored_q2"/>
    <property type="match status" value="1"/>
</dbReference>
<name>NUOK_LEGPA</name>
<keyword id="KW-0997">Cell inner membrane</keyword>
<keyword id="KW-1003">Cell membrane</keyword>
<keyword id="KW-0472">Membrane</keyword>
<keyword id="KW-0520">NAD</keyword>
<keyword id="KW-0874">Quinone</keyword>
<keyword id="KW-1278">Translocase</keyword>
<keyword id="KW-0812">Transmembrane</keyword>
<keyword id="KW-1133">Transmembrane helix</keyword>
<keyword id="KW-0813">Transport</keyword>
<keyword id="KW-0830">Ubiquinone</keyword>
<gene>
    <name evidence="1" type="primary">nuoK</name>
    <name type="ordered locus">lpp2826</name>
</gene>
<organism>
    <name type="scientific">Legionella pneumophila (strain Paris)</name>
    <dbReference type="NCBI Taxonomy" id="297246"/>
    <lineage>
        <taxon>Bacteria</taxon>
        <taxon>Pseudomonadati</taxon>
        <taxon>Pseudomonadota</taxon>
        <taxon>Gammaproteobacteria</taxon>
        <taxon>Legionellales</taxon>
        <taxon>Legionellaceae</taxon>
        <taxon>Legionella</taxon>
    </lineage>
</organism>
<sequence>MIPVYDYLVLGVILFGLSLVGIMLNRKNIILLLVCVELMLLAVNTNFIAFSHYYNEVGGQVFVFFILTVAAAEAAIGLAIVMLLYRNRGNIDVDKMNHLKG</sequence>
<comment type="function">
    <text evidence="1">NDH-1 shuttles electrons from NADH, via FMN and iron-sulfur (Fe-S) centers, to quinones in the respiratory chain. The immediate electron acceptor for the enzyme in this species is believed to be ubiquinone. Couples the redox reaction to proton translocation (for every two electrons transferred, four hydrogen ions are translocated across the cytoplasmic membrane), and thus conserves the redox energy in a proton gradient.</text>
</comment>
<comment type="catalytic activity">
    <reaction evidence="1">
        <text>a quinone + NADH + 5 H(+)(in) = a quinol + NAD(+) + 4 H(+)(out)</text>
        <dbReference type="Rhea" id="RHEA:57888"/>
        <dbReference type="ChEBI" id="CHEBI:15378"/>
        <dbReference type="ChEBI" id="CHEBI:24646"/>
        <dbReference type="ChEBI" id="CHEBI:57540"/>
        <dbReference type="ChEBI" id="CHEBI:57945"/>
        <dbReference type="ChEBI" id="CHEBI:132124"/>
    </reaction>
</comment>
<comment type="subunit">
    <text evidence="1">NDH-1 is composed of 14 different subunits. Subunits NuoA, H, J, K, L, M, N constitute the membrane sector of the complex.</text>
</comment>
<comment type="subcellular location">
    <subcellularLocation>
        <location evidence="1">Cell inner membrane</location>
        <topology evidence="1">Multi-pass membrane protein</topology>
    </subcellularLocation>
</comment>
<comment type="similarity">
    <text evidence="1">Belongs to the complex I subunit 4L family.</text>
</comment>
<protein>
    <recommendedName>
        <fullName evidence="1">NADH-quinone oxidoreductase subunit K</fullName>
        <ecNumber evidence="1">7.1.1.-</ecNumber>
    </recommendedName>
    <alternativeName>
        <fullName evidence="1">NADH dehydrogenase I subunit K</fullName>
    </alternativeName>
    <alternativeName>
        <fullName evidence="1">NDH-1 subunit K</fullName>
    </alternativeName>
</protein>
<proteinExistence type="inferred from homology"/>
<feature type="chain" id="PRO_0000390105" description="NADH-quinone oxidoreductase subunit K">
    <location>
        <begin position="1"/>
        <end position="101"/>
    </location>
</feature>
<feature type="transmembrane region" description="Helical" evidence="1">
    <location>
        <begin position="4"/>
        <end position="24"/>
    </location>
</feature>
<feature type="transmembrane region" description="Helical" evidence="1">
    <location>
        <begin position="29"/>
        <end position="49"/>
    </location>
</feature>
<feature type="transmembrane region" description="Helical" evidence="1">
    <location>
        <begin position="61"/>
        <end position="81"/>
    </location>
</feature>
<evidence type="ECO:0000255" key="1">
    <source>
        <dbReference type="HAMAP-Rule" id="MF_01456"/>
    </source>
</evidence>